<organism>
    <name type="scientific">Aspergillus oryzae (strain ATCC 42149 / RIB 40)</name>
    <name type="common">Yellow koji mold</name>
    <dbReference type="NCBI Taxonomy" id="510516"/>
    <lineage>
        <taxon>Eukaryota</taxon>
        <taxon>Fungi</taxon>
        <taxon>Dikarya</taxon>
        <taxon>Ascomycota</taxon>
        <taxon>Pezizomycotina</taxon>
        <taxon>Eurotiomycetes</taxon>
        <taxon>Eurotiomycetidae</taxon>
        <taxon>Eurotiales</taxon>
        <taxon>Aspergillaceae</taxon>
        <taxon>Aspergillus</taxon>
        <taxon>Aspergillus subgen. Circumdati</taxon>
    </lineage>
</organism>
<name>NCPR_ASPOR</name>
<keyword id="KW-1003">Cell membrane</keyword>
<keyword id="KW-0256">Endoplasmic reticulum</keyword>
<keyword id="KW-0274">FAD</keyword>
<keyword id="KW-0285">Flavoprotein</keyword>
<keyword id="KW-0288">FMN</keyword>
<keyword id="KW-0444">Lipid biosynthesis</keyword>
<keyword id="KW-0443">Lipid metabolism</keyword>
<keyword id="KW-0472">Membrane</keyword>
<keyword id="KW-0496">Mitochondrion</keyword>
<keyword id="KW-1000">Mitochondrion outer membrane</keyword>
<keyword id="KW-0521">NADP</keyword>
<keyword id="KW-0560">Oxidoreductase</keyword>
<keyword id="KW-1185">Reference proteome</keyword>
<keyword id="KW-0752">Steroid biosynthesis</keyword>
<keyword id="KW-0753">Steroid metabolism</keyword>
<keyword id="KW-0756">Sterol biosynthesis</keyword>
<keyword id="KW-1207">Sterol metabolism</keyword>
<keyword id="KW-0812">Transmembrane</keyword>
<keyword id="KW-1133">Transmembrane helix</keyword>
<gene>
    <name evidence="1" type="primary">cprA</name>
    <name type="ORF">AO090023000520</name>
</gene>
<feature type="chain" id="PRO_0000404330" description="NADPH--cytochrome P450 reductase">
    <location>
        <begin position="1"/>
        <end position="695"/>
    </location>
</feature>
<feature type="topological domain" description="Lumenal" evidence="1">
    <location>
        <begin position="1"/>
        <end position="8"/>
    </location>
</feature>
<feature type="transmembrane region" description="Helical" evidence="1">
    <location>
        <begin position="9"/>
        <end position="31"/>
    </location>
</feature>
<feature type="topological domain" description="Cytoplasmic" evidence="1">
    <location>
        <begin position="32"/>
        <end position="695"/>
    </location>
</feature>
<feature type="domain" description="Flavodoxin-like" evidence="1">
    <location>
        <begin position="66"/>
        <end position="221"/>
    </location>
</feature>
<feature type="domain" description="FAD-binding FR-type" evidence="1">
    <location>
        <begin position="277"/>
        <end position="538"/>
    </location>
</feature>
<feature type="binding site" evidence="1">
    <location>
        <begin position="72"/>
        <end position="77"/>
    </location>
    <ligand>
        <name>FMN</name>
        <dbReference type="ChEBI" id="CHEBI:58210"/>
    </ligand>
</feature>
<feature type="binding site" evidence="1">
    <location>
        <begin position="123"/>
        <end position="126"/>
    </location>
    <ligand>
        <name>FMN</name>
        <dbReference type="ChEBI" id="CHEBI:58210"/>
    </ligand>
</feature>
<feature type="binding site" evidence="1">
    <location>
        <begin position="169"/>
        <end position="178"/>
    </location>
    <ligand>
        <name>FMN</name>
        <dbReference type="ChEBI" id="CHEBI:58210"/>
    </ligand>
</feature>
<feature type="binding site" evidence="1">
    <location>
        <position position="204"/>
    </location>
    <ligand>
        <name>FMN</name>
        <dbReference type="ChEBI" id="CHEBI:58210"/>
    </ligand>
</feature>
<feature type="binding site" evidence="1">
    <location>
        <position position="296"/>
    </location>
    <ligand>
        <name>NADP(+)</name>
        <dbReference type="ChEBI" id="CHEBI:58349"/>
    </ligand>
</feature>
<feature type="binding site" evidence="1">
    <location>
        <begin position="451"/>
        <end position="454"/>
    </location>
    <ligand>
        <name>FAD</name>
        <dbReference type="ChEBI" id="CHEBI:57692"/>
    </ligand>
</feature>
<feature type="binding site" evidence="1">
    <location>
        <begin position="469"/>
        <end position="471"/>
    </location>
    <ligand>
        <name>FAD</name>
        <dbReference type="ChEBI" id="CHEBI:57692"/>
    </ligand>
</feature>
<feature type="binding site" evidence="1">
    <location>
        <begin position="486"/>
        <end position="489"/>
    </location>
    <ligand>
        <name>FAD</name>
        <dbReference type="ChEBI" id="CHEBI:57692"/>
    </ligand>
</feature>
<feature type="binding site" evidence="1">
    <location>
        <position position="552"/>
    </location>
    <ligand>
        <name>NADP(+)</name>
        <dbReference type="ChEBI" id="CHEBI:58349"/>
    </ligand>
</feature>
<feature type="binding site" evidence="1">
    <location>
        <begin position="614"/>
        <end position="615"/>
    </location>
    <ligand>
        <name>NADP(+)</name>
        <dbReference type="ChEBI" id="CHEBI:58349"/>
    </ligand>
</feature>
<feature type="binding site" evidence="1">
    <location>
        <begin position="620"/>
        <end position="624"/>
    </location>
    <ligand>
        <name>NADP(+)</name>
        <dbReference type="ChEBI" id="CHEBI:58349"/>
    </ligand>
</feature>
<feature type="binding site" evidence="1">
    <location>
        <position position="656"/>
    </location>
    <ligand>
        <name>NADP(+)</name>
        <dbReference type="ChEBI" id="CHEBI:58349"/>
    </ligand>
</feature>
<feature type="binding site" evidence="1">
    <location>
        <position position="694"/>
    </location>
    <ligand>
        <name>FAD</name>
        <dbReference type="ChEBI" id="CHEBI:57692"/>
    </ligand>
</feature>
<reference evidence="2" key="1">
    <citation type="journal article" date="2005" name="Nature">
        <title>Genome sequencing and analysis of Aspergillus oryzae.</title>
        <authorList>
            <person name="Machida M."/>
            <person name="Asai K."/>
            <person name="Sano M."/>
            <person name="Tanaka T."/>
            <person name="Kumagai T."/>
            <person name="Terai G."/>
            <person name="Kusumoto K."/>
            <person name="Arima T."/>
            <person name="Akita O."/>
            <person name="Kashiwagi Y."/>
            <person name="Abe K."/>
            <person name="Gomi K."/>
            <person name="Horiuchi H."/>
            <person name="Kitamoto K."/>
            <person name="Kobayashi T."/>
            <person name="Takeuchi M."/>
            <person name="Denning D.W."/>
            <person name="Galagan J.E."/>
            <person name="Nierman W.C."/>
            <person name="Yu J."/>
            <person name="Archer D.B."/>
            <person name="Bennett J.W."/>
            <person name="Bhatnagar D."/>
            <person name="Cleveland T.E."/>
            <person name="Fedorova N.D."/>
            <person name="Gotoh O."/>
            <person name="Horikawa H."/>
            <person name="Hosoyama A."/>
            <person name="Ichinomiya M."/>
            <person name="Igarashi R."/>
            <person name="Iwashita K."/>
            <person name="Juvvadi P.R."/>
            <person name="Kato M."/>
            <person name="Kato Y."/>
            <person name="Kin T."/>
            <person name="Kokubun A."/>
            <person name="Maeda H."/>
            <person name="Maeyama N."/>
            <person name="Maruyama J."/>
            <person name="Nagasaki H."/>
            <person name="Nakajima T."/>
            <person name="Oda K."/>
            <person name="Okada K."/>
            <person name="Paulsen I."/>
            <person name="Sakamoto K."/>
            <person name="Sawano T."/>
            <person name="Takahashi M."/>
            <person name="Takase K."/>
            <person name="Terabayashi Y."/>
            <person name="Wortman J.R."/>
            <person name="Yamada O."/>
            <person name="Yamagata Y."/>
            <person name="Anazawa H."/>
            <person name="Hata Y."/>
            <person name="Koide Y."/>
            <person name="Komori T."/>
            <person name="Koyama Y."/>
            <person name="Minetoki T."/>
            <person name="Suharnan S."/>
            <person name="Tanaka A."/>
            <person name="Isono K."/>
            <person name="Kuhara S."/>
            <person name="Ogasawara N."/>
            <person name="Kikuchi H."/>
        </authorList>
    </citation>
    <scope>NUCLEOTIDE SEQUENCE [LARGE SCALE GENOMIC DNA]</scope>
    <source>
        <strain>ATCC 42149 / RIB 40</strain>
    </source>
</reference>
<evidence type="ECO:0000255" key="1">
    <source>
        <dbReference type="HAMAP-Rule" id="MF_03212"/>
    </source>
</evidence>
<evidence type="ECO:0000312" key="2">
    <source>
        <dbReference type="EMBL" id="BAE59058.1"/>
    </source>
</evidence>
<comment type="function">
    <text evidence="1">This enzyme is required for electron transfer from NADP to cytochrome P450 in microsomes. It can also provide electron transfer to heme oxygenase and cytochrome B5. Involved in ergosterol biosynthesis.</text>
</comment>
<comment type="catalytic activity">
    <reaction evidence="1">
        <text>2 oxidized [cytochrome P450] + NADPH = 2 reduced [cytochrome P450] + NADP(+) + H(+)</text>
        <dbReference type="Rhea" id="RHEA:24040"/>
        <dbReference type="Rhea" id="RHEA-COMP:14627"/>
        <dbReference type="Rhea" id="RHEA-COMP:14628"/>
        <dbReference type="ChEBI" id="CHEBI:15378"/>
        <dbReference type="ChEBI" id="CHEBI:55376"/>
        <dbReference type="ChEBI" id="CHEBI:57783"/>
        <dbReference type="ChEBI" id="CHEBI:58349"/>
        <dbReference type="ChEBI" id="CHEBI:60344"/>
        <dbReference type="EC" id="1.6.2.4"/>
    </reaction>
</comment>
<comment type="cofactor">
    <cofactor evidence="1">
        <name>FAD</name>
        <dbReference type="ChEBI" id="CHEBI:57692"/>
    </cofactor>
    <text evidence="1">Binds 1 FAD per monomer.</text>
</comment>
<comment type="cofactor">
    <cofactor evidence="1">
        <name>FMN</name>
        <dbReference type="ChEBI" id="CHEBI:58210"/>
    </cofactor>
    <text evidence="1">Binds 1 FMN per monomer.</text>
</comment>
<comment type="subcellular location">
    <subcellularLocation>
        <location evidence="1">Endoplasmic reticulum membrane</location>
        <topology evidence="1">Single-pass membrane protein</topology>
        <orientation evidence="1">Cytoplasmic side</orientation>
    </subcellularLocation>
    <subcellularLocation>
        <location evidence="1">Mitochondrion outer membrane</location>
        <topology evidence="1">Single-pass membrane protein</topology>
        <orientation evidence="1">Cytoplasmic side</orientation>
    </subcellularLocation>
    <subcellularLocation>
        <location evidence="1">Cell membrane</location>
        <topology evidence="1">Single-pass membrane protein</topology>
        <orientation evidence="1">Cytoplasmic side</orientation>
    </subcellularLocation>
</comment>
<comment type="similarity">
    <text evidence="1">Belongs to the NADPH--cytochrome P450 reductase family.</text>
</comment>
<comment type="similarity">
    <text evidence="1">In the N-terminal section; belongs to the flavodoxin family.</text>
</comment>
<comment type="similarity">
    <text evidence="1">In the C-terminal section; belongs to the flavoprotein pyridine nucleotide cytochrome reductase family.</text>
</comment>
<proteinExistence type="inferred from homology"/>
<protein>
    <recommendedName>
        <fullName evidence="1">NADPH--cytochrome P450 reductase</fullName>
        <shortName evidence="1">CPR</shortName>
        <shortName evidence="1">P450R</shortName>
        <ecNumber evidence="1">1.6.2.4</ecNumber>
    </recommendedName>
</protein>
<sequence>MAQLDTLDLVVLVALLVGSVAYFTKGTYWAVAKDPYASSGPAMNGAAKAGKTRDILEKMEETGKNCVIFYGSQTGTAEDYASRLAKEGSQRFGLKTMVADLEDYDYENLDKFPEDKVAFFVLATYGEGEPTDNAVEFYQFITGEDVAFESGASAEEKPLSALKYVTFGLGNNTYEHYNAMVRNLDAALQKLGAQRIGSAGEGDDGAGTMEEDFLAWKEPMWTALSEAMGLQEREAVYEPVFNVTEDESKSAEDETVYLGEPTKGHLEGQPKGPFSAHNPFIAPIVESRELFTVKDRNCLHMEISIAGSNLTYQTGDHIAVWPTNAGAEVDRFLQVFGLEEKRHSVINIKGIDVTAKVPIPTPTTYDAAVRYYMEVCAPVSRQFVSSLAAFAPDEATKTEIQRLGSDKDYFHEKITNQCFNIAQALQSITSKPFSAVPFSLLIEGLNKLQPRYYSISSSSLVQKDKISITAVVESVRLPGASHLVKGVTTNYLLALKQKQNGEPSPDPHGLTYAITGPRNKYDGIHVPVHVRHSNFKLPSDPSRPIIMVGPGTGVAPFRGFIQERAALAAKGEKVGTTVLFFGCRNRNEDFLYQDEFKAYEEQLGDSLKIITAFSRETSQKVYVQHRLREQAELVSDLLKQKATFYVCGDAANMAREVNLVLGQIIAQQRGLPAEKGEEMVKHMRSSGSYQEDVWS</sequence>
<accession>Q2UHA7</accession>
<dbReference type="EC" id="1.6.2.4" evidence="1"/>
<dbReference type="EMBL" id="BA000051">
    <property type="protein sequence ID" value="BAE59058.1"/>
    <property type="molecule type" value="Genomic_DNA"/>
</dbReference>
<dbReference type="RefSeq" id="XP_001821060.1">
    <property type="nucleotide sequence ID" value="XM_001821008.2"/>
</dbReference>
<dbReference type="SMR" id="Q2UHA7"/>
<dbReference type="STRING" id="510516.Q2UHA7"/>
<dbReference type="EnsemblFungi" id="BAE59058">
    <property type="protein sequence ID" value="BAE59058"/>
    <property type="gene ID" value="AO090023000520"/>
</dbReference>
<dbReference type="GeneID" id="5993062"/>
<dbReference type="KEGG" id="aor:AO090023000520"/>
<dbReference type="VEuPathDB" id="FungiDB:AO090023000520"/>
<dbReference type="HOGENOM" id="CLU_001570_17_3_1"/>
<dbReference type="OMA" id="QKRYQRD"/>
<dbReference type="OrthoDB" id="44878at5052"/>
<dbReference type="Proteomes" id="UP000006564">
    <property type="component" value="Chromosome 3"/>
</dbReference>
<dbReference type="GO" id="GO:0005829">
    <property type="term" value="C:cytosol"/>
    <property type="evidence" value="ECO:0007669"/>
    <property type="project" value="TreeGrafter"/>
</dbReference>
<dbReference type="GO" id="GO:0005789">
    <property type="term" value="C:endoplasmic reticulum membrane"/>
    <property type="evidence" value="ECO:0007669"/>
    <property type="project" value="UniProtKB-SubCell"/>
</dbReference>
<dbReference type="GO" id="GO:0005741">
    <property type="term" value="C:mitochondrial outer membrane"/>
    <property type="evidence" value="ECO:0007669"/>
    <property type="project" value="UniProtKB-SubCell"/>
</dbReference>
<dbReference type="GO" id="GO:0005886">
    <property type="term" value="C:plasma membrane"/>
    <property type="evidence" value="ECO:0007669"/>
    <property type="project" value="UniProtKB-SubCell"/>
</dbReference>
<dbReference type="GO" id="GO:0050660">
    <property type="term" value="F:flavin adenine dinucleotide binding"/>
    <property type="evidence" value="ECO:0007669"/>
    <property type="project" value="UniProtKB-UniRule"/>
</dbReference>
<dbReference type="GO" id="GO:0010181">
    <property type="term" value="F:FMN binding"/>
    <property type="evidence" value="ECO:0007669"/>
    <property type="project" value="UniProtKB-UniRule"/>
</dbReference>
<dbReference type="GO" id="GO:0050661">
    <property type="term" value="F:NADP binding"/>
    <property type="evidence" value="ECO:0007669"/>
    <property type="project" value="UniProtKB-UniRule"/>
</dbReference>
<dbReference type="GO" id="GO:0003958">
    <property type="term" value="F:NADPH-hemoprotein reductase activity"/>
    <property type="evidence" value="ECO:0007669"/>
    <property type="project" value="UniProtKB-UniRule"/>
</dbReference>
<dbReference type="GO" id="GO:0006696">
    <property type="term" value="P:ergosterol biosynthetic process"/>
    <property type="evidence" value="ECO:0007669"/>
    <property type="project" value="UniProtKB-UniRule"/>
</dbReference>
<dbReference type="CDD" id="cd06204">
    <property type="entry name" value="CYPOR"/>
    <property type="match status" value="1"/>
</dbReference>
<dbReference type="FunFam" id="1.20.990.10:FF:000009">
    <property type="entry name" value="NADPH--cytochrome P450 reductase"/>
    <property type="match status" value="1"/>
</dbReference>
<dbReference type="FunFam" id="2.40.30.10:FF:000100">
    <property type="entry name" value="NADPH--cytochrome P450 reductase"/>
    <property type="match status" value="1"/>
</dbReference>
<dbReference type="FunFam" id="2.40.30.10:FF:000111">
    <property type="entry name" value="NADPH--cytochrome P450 reductase"/>
    <property type="match status" value="1"/>
</dbReference>
<dbReference type="FunFam" id="3.40.50.360:FF:000024">
    <property type="entry name" value="NADPH--cytochrome P450 reductase"/>
    <property type="match status" value="1"/>
</dbReference>
<dbReference type="FunFam" id="3.40.50.80:FF:000018">
    <property type="entry name" value="NADPH--cytochrome P450 reductase"/>
    <property type="match status" value="1"/>
</dbReference>
<dbReference type="Gene3D" id="3.40.50.360">
    <property type="match status" value="1"/>
</dbReference>
<dbReference type="Gene3D" id="1.20.990.10">
    <property type="entry name" value="NADPH-cytochrome p450 Reductase, Chain A, domain 3"/>
    <property type="match status" value="1"/>
</dbReference>
<dbReference type="Gene3D" id="3.40.50.80">
    <property type="entry name" value="Nucleotide-binding domain of ferredoxin-NADP reductase (FNR) module"/>
    <property type="match status" value="1"/>
</dbReference>
<dbReference type="Gene3D" id="2.40.30.10">
    <property type="entry name" value="Translation factors"/>
    <property type="match status" value="1"/>
</dbReference>
<dbReference type="HAMAP" id="MF_03212">
    <property type="entry name" value="NCPR"/>
    <property type="match status" value="1"/>
</dbReference>
<dbReference type="InterPro" id="IPR003097">
    <property type="entry name" value="CysJ-like_FAD-binding"/>
</dbReference>
<dbReference type="InterPro" id="IPR017927">
    <property type="entry name" value="FAD-bd_FR_type"/>
</dbReference>
<dbReference type="InterPro" id="IPR001094">
    <property type="entry name" value="Flavdoxin-like"/>
</dbReference>
<dbReference type="InterPro" id="IPR008254">
    <property type="entry name" value="Flavodoxin/NO_synth"/>
</dbReference>
<dbReference type="InterPro" id="IPR001709">
    <property type="entry name" value="Flavoprot_Pyr_Nucl_cyt_Rdtase"/>
</dbReference>
<dbReference type="InterPro" id="IPR029039">
    <property type="entry name" value="Flavoprotein-like_sf"/>
</dbReference>
<dbReference type="InterPro" id="IPR039261">
    <property type="entry name" value="FNR_nucleotide-bd"/>
</dbReference>
<dbReference type="InterPro" id="IPR023173">
    <property type="entry name" value="NADPH_Cyt_P450_Rdtase_alpha"/>
</dbReference>
<dbReference type="InterPro" id="IPR001433">
    <property type="entry name" value="OxRdtase_FAD/NAD-bd"/>
</dbReference>
<dbReference type="InterPro" id="IPR023208">
    <property type="entry name" value="P450R"/>
</dbReference>
<dbReference type="InterPro" id="IPR017938">
    <property type="entry name" value="Riboflavin_synthase-like_b-brl"/>
</dbReference>
<dbReference type="PANTHER" id="PTHR19384:SF17">
    <property type="entry name" value="NADPH--CYTOCHROME P450 REDUCTASE"/>
    <property type="match status" value="1"/>
</dbReference>
<dbReference type="PANTHER" id="PTHR19384">
    <property type="entry name" value="NITRIC OXIDE SYNTHASE-RELATED"/>
    <property type="match status" value="1"/>
</dbReference>
<dbReference type="Pfam" id="PF00667">
    <property type="entry name" value="FAD_binding_1"/>
    <property type="match status" value="1"/>
</dbReference>
<dbReference type="Pfam" id="PF00258">
    <property type="entry name" value="Flavodoxin_1"/>
    <property type="match status" value="1"/>
</dbReference>
<dbReference type="Pfam" id="PF00175">
    <property type="entry name" value="NAD_binding_1"/>
    <property type="match status" value="1"/>
</dbReference>
<dbReference type="PIRSF" id="PIRSF000208">
    <property type="entry name" value="P450R"/>
    <property type="match status" value="1"/>
</dbReference>
<dbReference type="PRINTS" id="PR00369">
    <property type="entry name" value="FLAVODOXIN"/>
</dbReference>
<dbReference type="PRINTS" id="PR00371">
    <property type="entry name" value="FPNCR"/>
</dbReference>
<dbReference type="SUPFAM" id="SSF52343">
    <property type="entry name" value="Ferredoxin reductase-like, C-terminal NADP-linked domain"/>
    <property type="match status" value="1"/>
</dbReference>
<dbReference type="SUPFAM" id="SSF52218">
    <property type="entry name" value="Flavoproteins"/>
    <property type="match status" value="1"/>
</dbReference>
<dbReference type="SUPFAM" id="SSF63380">
    <property type="entry name" value="Riboflavin synthase domain-like"/>
    <property type="match status" value="1"/>
</dbReference>
<dbReference type="PROSITE" id="PS51384">
    <property type="entry name" value="FAD_FR"/>
    <property type="match status" value="1"/>
</dbReference>
<dbReference type="PROSITE" id="PS50902">
    <property type="entry name" value="FLAVODOXIN_LIKE"/>
    <property type="match status" value="1"/>
</dbReference>